<evidence type="ECO:0000250" key="1">
    <source>
        <dbReference type="UniProtKB" id="K7IM66"/>
    </source>
</evidence>
<evidence type="ECO:0000255" key="2">
    <source>
        <dbReference type="HAMAP-Rule" id="MF_03003"/>
    </source>
</evidence>
<evidence type="ECO:0000256" key="3">
    <source>
        <dbReference type="SAM" id="MobiDB-lite"/>
    </source>
</evidence>
<organism>
    <name type="scientific">Drosophila willistoni</name>
    <name type="common">Fruit fly</name>
    <dbReference type="NCBI Taxonomy" id="7260"/>
    <lineage>
        <taxon>Eukaryota</taxon>
        <taxon>Metazoa</taxon>
        <taxon>Ecdysozoa</taxon>
        <taxon>Arthropoda</taxon>
        <taxon>Hexapoda</taxon>
        <taxon>Insecta</taxon>
        <taxon>Pterygota</taxon>
        <taxon>Neoptera</taxon>
        <taxon>Endopterygota</taxon>
        <taxon>Diptera</taxon>
        <taxon>Brachycera</taxon>
        <taxon>Muscomorpha</taxon>
        <taxon>Ephydroidea</taxon>
        <taxon>Drosophilidae</taxon>
        <taxon>Drosophila</taxon>
        <taxon>Sophophora</taxon>
    </lineage>
</organism>
<gene>
    <name evidence="2" type="primary">eIF3d2</name>
    <name evidence="2" type="synonym">eIF3-S7-2</name>
    <name type="ORF">GK11533</name>
</gene>
<dbReference type="EMBL" id="CH964232">
    <property type="protein sequence ID" value="EDW80499.1"/>
    <property type="molecule type" value="Genomic_DNA"/>
</dbReference>
<dbReference type="RefSeq" id="XP_002069513.1">
    <property type="nucleotide sequence ID" value="XM_002069477.1"/>
</dbReference>
<dbReference type="SMR" id="B4N8Z4"/>
<dbReference type="STRING" id="7260.B4N8Z4"/>
<dbReference type="EnsemblMetazoa" id="FBtr0242184">
    <property type="protein sequence ID" value="FBpp0240676"/>
    <property type="gene ID" value="FBgn0213544"/>
</dbReference>
<dbReference type="EnsemblMetazoa" id="XM_002069477.3">
    <property type="protein sequence ID" value="XP_002069513.3"/>
    <property type="gene ID" value="LOC6648146"/>
</dbReference>
<dbReference type="GeneID" id="6648146"/>
<dbReference type="KEGG" id="dwi:6648146"/>
<dbReference type="CTD" id="41475"/>
<dbReference type="eggNOG" id="KOG2479">
    <property type="taxonomic scope" value="Eukaryota"/>
</dbReference>
<dbReference type="HOGENOM" id="CLU_024521_2_0_1"/>
<dbReference type="OMA" id="CKHNGVI"/>
<dbReference type="OrthoDB" id="16538at2759"/>
<dbReference type="PhylomeDB" id="B4N8Z4"/>
<dbReference type="Proteomes" id="UP000007798">
    <property type="component" value="Unassembled WGS sequence"/>
</dbReference>
<dbReference type="GO" id="GO:0016282">
    <property type="term" value="C:eukaryotic 43S preinitiation complex"/>
    <property type="evidence" value="ECO:0007669"/>
    <property type="project" value="UniProtKB-UniRule"/>
</dbReference>
<dbReference type="GO" id="GO:0033290">
    <property type="term" value="C:eukaryotic 48S preinitiation complex"/>
    <property type="evidence" value="ECO:0007669"/>
    <property type="project" value="UniProtKB-UniRule"/>
</dbReference>
<dbReference type="GO" id="GO:0005852">
    <property type="term" value="C:eukaryotic translation initiation factor 3 complex"/>
    <property type="evidence" value="ECO:0000250"/>
    <property type="project" value="UniProtKB"/>
</dbReference>
<dbReference type="GO" id="GO:0098808">
    <property type="term" value="F:mRNA cap binding"/>
    <property type="evidence" value="ECO:0007669"/>
    <property type="project" value="UniProtKB-UniRule"/>
</dbReference>
<dbReference type="GO" id="GO:0003743">
    <property type="term" value="F:translation initiation factor activity"/>
    <property type="evidence" value="ECO:0000250"/>
    <property type="project" value="UniProtKB"/>
</dbReference>
<dbReference type="GO" id="GO:0002191">
    <property type="term" value="P:cap-dependent translational initiation"/>
    <property type="evidence" value="ECO:0007669"/>
    <property type="project" value="UniProtKB-UniRule"/>
</dbReference>
<dbReference type="GO" id="GO:0001732">
    <property type="term" value="P:formation of cytoplasmic translation initiation complex"/>
    <property type="evidence" value="ECO:0007669"/>
    <property type="project" value="UniProtKB-UniRule"/>
</dbReference>
<dbReference type="GO" id="GO:0006446">
    <property type="term" value="P:regulation of translational initiation"/>
    <property type="evidence" value="ECO:0000250"/>
    <property type="project" value="UniProtKB"/>
</dbReference>
<dbReference type="HAMAP" id="MF_03003">
    <property type="entry name" value="eIF3d"/>
    <property type="match status" value="1"/>
</dbReference>
<dbReference type="InterPro" id="IPR007783">
    <property type="entry name" value="eIF3d"/>
</dbReference>
<dbReference type="PANTHER" id="PTHR12399">
    <property type="entry name" value="EUKARYOTIC TRANSLATION INITIATION FACTOR 3 SUBUNIT 7"/>
    <property type="match status" value="1"/>
</dbReference>
<dbReference type="PANTHER" id="PTHR12399:SF0">
    <property type="entry name" value="EUKARYOTIC TRANSLATION INITIATION FACTOR 3 SUBUNIT D"/>
    <property type="match status" value="1"/>
</dbReference>
<dbReference type="Pfam" id="PF05091">
    <property type="entry name" value="eIF-3_zeta"/>
    <property type="match status" value="1"/>
</dbReference>
<dbReference type="PIRSF" id="PIRSF016281">
    <property type="entry name" value="EIF-3_zeta"/>
    <property type="match status" value="1"/>
</dbReference>
<comment type="function">
    <text evidence="2">mRNA cap-binding component of the eukaryotic translation initiation factor 3 (eIF-3) complex, which is involved in protein synthesis of a specialized repertoire of mRNAs and, together with other initiation factors, stimulates binding of mRNA and methionyl-tRNAi to the 40S ribosome. The eIF-3 complex specifically targets and initiates translation of a subset of mRNAs involved in cell proliferation. In the eIF-3 complex, eif3d specifically recognizes and binds the 7-methylguanosine cap of a subset of mRNAs.</text>
</comment>
<comment type="subunit">
    <text evidence="2">Component of the eukaryotic translation initiation factor 3 (eIF-3) complex. The eIF-3 complex interacts with pix.</text>
</comment>
<comment type="subcellular location">
    <subcellularLocation>
        <location evidence="2">Cytoplasm</location>
    </subcellularLocation>
</comment>
<comment type="domain">
    <text evidence="2">The RNA gate region regulates mRNA cap recognition to prevent promiscuous mRNA-binding before assembly of eif3d into the full eukaryotic translation initiation factor 3 (eIF-3) complex.</text>
</comment>
<comment type="similarity">
    <text evidence="2">Belongs to the eIF-3 subunit D family.</text>
</comment>
<feature type="chain" id="PRO_0000364163" description="Eukaryotic translation initiation factor 3 subunit D-2">
    <location>
        <begin position="1"/>
        <end position="550"/>
    </location>
</feature>
<feature type="region of interest" description="Disordered" evidence="3">
    <location>
        <begin position="97"/>
        <end position="126"/>
    </location>
</feature>
<feature type="region of interest" description="RNA gate" evidence="1">
    <location>
        <begin position="287"/>
        <end position="301"/>
    </location>
</feature>
<feature type="region of interest" description="Disordered" evidence="3">
    <location>
        <begin position="530"/>
        <end position="550"/>
    </location>
</feature>
<protein>
    <recommendedName>
        <fullName evidence="2">Eukaryotic translation initiation factor 3 subunit D-2</fullName>
        <shortName evidence="2">eIF3d-2</shortName>
    </recommendedName>
    <alternativeName>
        <fullName evidence="2">Eukaryotic translation initiation factor 3 subunit 7-2</fullName>
    </alternativeName>
</protein>
<proteinExistence type="inferred from homology"/>
<keyword id="KW-0963">Cytoplasm</keyword>
<keyword id="KW-0396">Initiation factor</keyword>
<keyword id="KW-0597">Phosphoprotein</keyword>
<keyword id="KW-0648">Protein biosynthesis</keyword>
<keyword id="KW-1185">Reference proteome</keyword>
<keyword id="KW-0694">RNA-binding</keyword>
<sequence length="550" mass="63002">MSKNYAPFIKPYMQYNEHGWGPCELDVVDVPYQPFSKSDRLGKITDWTVTQQDKKFTNKYASSFGNNNQYAYFHEEDDESFRLVDSVGSKVIKPYQRGRGFRPSVHNNPRNVRNQRGRKGNAMGNIMGPGLASITQRYGKGRDGRRNQGRKYRNLPARLRESSVVVQSDWVSVKEIDFPRLLKLSLPNMKEGEDIVTCGALDYYDKAYDRVNLKNERTLMKIDRIVHTATTTDDPIIRRLSKTMGNVFATDDILATIMCCTRSNYSWDVVIEKLGTKIFFDKRDNVKFDMLTVNETSQEPPMDEEGSNNSAHSLSMEATFINHNFSQQVLKMGAEENKFKLAEPNPFEEAGVELASMGYRYKQWDLGNDITLVARCKHNGVTQLPNGDMQFLSIRALNEWDSKAANSIEWRQKLDSQRGAVLSTELRNNACKLAKWTVESVLAGSDQLKLGYVSRVSPRDHLRHVILGTQQFKPQEFATQINLNMDNCWGILRCLIDIIRMQPDGKYLIMKDPNKPMVRIYHIPENAFDSDVSEEEESSEDKPFGLSMNN</sequence>
<accession>B4N8Z4</accession>
<reference key="1">
    <citation type="journal article" date="2007" name="Nature">
        <title>Evolution of genes and genomes on the Drosophila phylogeny.</title>
        <authorList>
            <consortium name="Drosophila 12 genomes consortium"/>
        </authorList>
    </citation>
    <scope>NUCLEOTIDE SEQUENCE [LARGE SCALE GENOMIC DNA]</scope>
    <source>
        <strain>Tucson 14030-0811.24</strain>
    </source>
</reference>
<name>EI3D2_DROWI</name>